<sequence length="83" mass="9195">MKNVITAPKIGQSVFIPFVTKTDELTGKTERIKGAALIPFDTIDAVYAENERSNNGKTVFSVRVKSGDVVKVVQRNEKWEAVL</sequence>
<proteinExistence type="predicted"/>
<accession>P19195</accession>
<name>Y9KD_BPBF2</name>
<feature type="chain" id="PRO_0000165291" description="Uncharacterized 9.2 kDa protein">
    <location>
        <begin position="1"/>
        <end position="83"/>
    </location>
</feature>
<organism>
    <name type="scientific">Escherichia phage Bf23</name>
    <name type="common">Enterobacteria phage BF23</name>
    <dbReference type="NCBI Taxonomy" id="10707"/>
    <lineage>
        <taxon>Viruses</taxon>
        <taxon>Duplodnaviria</taxon>
        <taxon>Heunggongvirae</taxon>
        <taxon>Uroviricota</taxon>
        <taxon>Caudoviricetes</taxon>
        <taxon>Demerecviridae</taxon>
        <taxon>Markadamsvirinae</taxon>
        <taxon>Tequintavirus</taxon>
    </lineage>
</organism>
<protein>
    <recommendedName>
        <fullName>Uncharacterized 9.2 kDa protein</fullName>
    </recommendedName>
</protein>
<organismHost>
    <name type="scientific">Escherichia coli</name>
    <dbReference type="NCBI Taxonomy" id="562"/>
</organismHost>
<organismHost>
    <name type="scientific">Salmonella typhimurium</name>
    <dbReference type="NCBI Taxonomy" id="90371"/>
</organismHost>
<dbReference type="EMBL" id="M37095">
    <property type="protein sequence ID" value="AAA32178.1"/>
    <property type="molecule type" value="Genomic_DNA"/>
</dbReference>
<dbReference type="PIR" id="A46348">
    <property type="entry name" value="A46348"/>
</dbReference>
<dbReference type="InterPro" id="IPR055601">
    <property type="entry name" value="DUF7177"/>
</dbReference>
<dbReference type="Pfam" id="PF23801">
    <property type="entry name" value="DUF7177"/>
    <property type="match status" value="1"/>
</dbReference>
<reference key="1">
    <citation type="journal article" date="1990" name="Virology">
        <title>Characterization of preearly genes in the terminal repetition of bacteriophage BF23 DNA by nucleotide sequencing and restriction mapping.</title>
        <authorList>
            <person name="Wiest J.S."/>
            <person name="McCorquodale D.J."/>
        </authorList>
    </citation>
    <scope>NUCLEOTIDE SEQUENCE [GENOMIC DNA]</scope>
    <source>
        <strain>Wild-type</strain>
    </source>
</reference>